<accession>Q32LN6</accession>
<gene>
    <name type="primary">SPATA31F3</name>
    <name evidence="1" type="synonym">FAM205C</name>
</gene>
<feature type="chain" id="PRO_0000319051" description="Protein SPATA31F3">
    <location>
        <begin position="1"/>
        <end position="408"/>
    </location>
</feature>
<feature type="transmembrane region" description="Helical" evidence="3">
    <location>
        <begin position="11"/>
        <end position="31"/>
    </location>
</feature>
<feature type="region of interest" description="Disordered" evidence="4">
    <location>
        <begin position="51"/>
        <end position="71"/>
    </location>
</feature>
<feature type="region of interest" description="Disordered" evidence="4">
    <location>
        <begin position="297"/>
        <end position="316"/>
    </location>
</feature>
<feature type="region of interest" description="Disordered" evidence="4">
    <location>
        <begin position="351"/>
        <end position="408"/>
    </location>
</feature>
<feature type="compositionally biased region" description="Polar residues" evidence="4">
    <location>
        <begin position="351"/>
        <end position="392"/>
    </location>
</feature>
<feature type="modified residue" description="Phosphoserine" evidence="2">
    <location>
        <position position="152"/>
    </location>
</feature>
<dbReference type="EMBL" id="BC109496">
    <property type="protein sequence ID" value="AAI09497.1"/>
    <property type="molecule type" value="mRNA"/>
</dbReference>
<dbReference type="RefSeq" id="NP_001070498.1">
    <property type="nucleotide sequence ID" value="NM_001077030.2"/>
</dbReference>
<dbReference type="SMR" id="Q32LN6"/>
<dbReference type="FunCoup" id="Q32LN6">
    <property type="interactions" value="10"/>
</dbReference>
<dbReference type="STRING" id="9913.ENSBTAP00000036503"/>
<dbReference type="PaxDb" id="9913-ENSBTAP00000036503"/>
<dbReference type="Ensembl" id="ENSBTAT00000036647.3">
    <property type="protein sequence ID" value="ENSBTAP00000036503.2"/>
    <property type="gene ID" value="ENSBTAG00000017338.5"/>
</dbReference>
<dbReference type="GeneID" id="767962"/>
<dbReference type="KEGG" id="bta:767962"/>
<dbReference type="CTD" id="767962"/>
<dbReference type="VEuPathDB" id="HostDB:ENSBTAG00000017338"/>
<dbReference type="VGNC" id="VGNC:56965">
    <property type="gene designation" value="FAM205C"/>
</dbReference>
<dbReference type="eggNOG" id="ENOG502THPB">
    <property type="taxonomic scope" value="Eukaryota"/>
</dbReference>
<dbReference type="GeneTree" id="ENSGT00950000183043"/>
<dbReference type="HOGENOM" id="CLU_061708_0_0_1"/>
<dbReference type="InParanoid" id="Q32LN6"/>
<dbReference type="OMA" id="FSHWINP"/>
<dbReference type="OrthoDB" id="9535823at2759"/>
<dbReference type="TreeFam" id="TF337856"/>
<dbReference type="Proteomes" id="UP000009136">
    <property type="component" value="Chromosome 8"/>
</dbReference>
<dbReference type="Bgee" id="ENSBTAG00000017338">
    <property type="expression patterns" value="Expressed in semen and 42 other cell types or tissues"/>
</dbReference>
<dbReference type="GO" id="GO:0016020">
    <property type="term" value="C:membrane"/>
    <property type="evidence" value="ECO:0007669"/>
    <property type="project" value="UniProtKB-SubCell"/>
</dbReference>
<dbReference type="InterPro" id="IPR027970">
    <property type="entry name" value="SPATA31F3-like"/>
</dbReference>
<dbReference type="PANTHER" id="PTHR21859">
    <property type="entry name" value="ACROSOME-SPECIFIC PROTEIN"/>
    <property type="match status" value="1"/>
</dbReference>
<dbReference type="PANTHER" id="PTHR21859:SF15">
    <property type="entry name" value="PROTEIN SPATA31F1-RELATED"/>
    <property type="match status" value="1"/>
</dbReference>
<dbReference type="Pfam" id="PF15371">
    <property type="entry name" value="DUF4599"/>
    <property type="match status" value="1"/>
</dbReference>
<organism>
    <name type="scientific">Bos taurus</name>
    <name type="common">Bovine</name>
    <dbReference type="NCBI Taxonomy" id="9913"/>
    <lineage>
        <taxon>Eukaryota</taxon>
        <taxon>Metazoa</taxon>
        <taxon>Chordata</taxon>
        <taxon>Craniata</taxon>
        <taxon>Vertebrata</taxon>
        <taxon>Euteleostomi</taxon>
        <taxon>Mammalia</taxon>
        <taxon>Eutheria</taxon>
        <taxon>Laurasiatheria</taxon>
        <taxon>Artiodactyla</taxon>
        <taxon>Ruminantia</taxon>
        <taxon>Pecora</taxon>
        <taxon>Bovidae</taxon>
        <taxon>Bovinae</taxon>
        <taxon>Bos</taxon>
    </lineage>
</organism>
<comment type="subcellular location">
    <subcellularLocation>
        <location evidence="5">Membrane</location>
        <topology evidence="5">Single-pass membrane protein</topology>
    </subcellularLocation>
</comment>
<comment type="similarity">
    <text evidence="5">Belongs to the SPATA31 family.</text>
</comment>
<proteinExistence type="evidence at transcript level"/>
<sequence>MLSPTFILWDVGYPFYTYGSIIIIALIIWQVKKNHRGLKLGPNRNCCRRHQKVKQRAKEKTPRARRHSRKEADKPLELLSIMRSQGWLPQEGSVRRLLCADPCCQICNSVALEIQQLISGETTLTTPTSSGPSQGSSCLEVLSMSSLSFDQSQESLPFKQLSLPSATRTVSQLTNQKSVTQSAAKSATKPATKSVSAISIRQYWAGHQQLRQECRGPELPLDAGALSSSSVEEPRIPVNQHVKKKSNSEGILKKQEAVEADLGNKLKHFTQWINPDMKGQGRKECILRCKDEKVAKTKTKKAEKSPPSTKRPMKGAKLEKEEGFFDALQCLDSEFQRQSMESVRSSQSCFLPLSSGSSKRSPLLTCATQPENPSHVSVSTSAEGTCLPQESTQSRKKELRGSQTSASS</sequence>
<name>S31F3_BOVIN</name>
<protein>
    <recommendedName>
        <fullName>Protein SPATA31F3</fullName>
    </recommendedName>
    <alternativeName>
        <fullName evidence="5">Protein FAM205C</fullName>
    </alternativeName>
</protein>
<reference key="1">
    <citation type="submission" date="2005-11" db="EMBL/GenBank/DDBJ databases">
        <authorList>
            <consortium name="NIH - Mammalian Gene Collection (MGC) project"/>
        </authorList>
    </citation>
    <scope>NUCLEOTIDE SEQUENCE [LARGE SCALE MRNA]</scope>
    <source>
        <strain>Crossbred X Angus</strain>
        <tissue>Liver</tissue>
    </source>
</reference>
<evidence type="ECO:0000250" key="1">
    <source>
        <dbReference type="UniProtKB" id="A6NFA0"/>
    </source>
</evidence>
<evidence type="ECO:0000250" key="2">
    <source>
        <dbReference type="UniProtKB" id="Q642A3"/>
    </source>
</evidence>
<evidence type="ECO:0000255" key="3"/>
<evidence type="ECO:0000256" key="4">
    <source>
        <dbReference type="SAM" id="MobiDB-lite"/>
    </source>
</evidence>
<evidence type="ECO:0000305" key="5"/>
<keyword id="KW-0472">Membrane</keyword>
<keyword id="KW-0597">Phosphoprotein</keyword>
<keyword id="KW-1185">Reference proteome</keyword>
<keyword id="KW-0812">Transmembrane</keyword>
<keyword id="KW-1133">Transmembrane helix</keyword>